<accession>A6ZMK7</accession>
<gene>
    <name type="primary">OSW5</name>
    <name type="ORF">SCY_4323</name>
</gene>
<proteinExistence type="inferred from homology"/>
<sequence>MVSTATFFFFVYLTLFVVIGFFSSLFIIPLLGISFVFAIGVVSFGFCSNMSFKMAQLIYVRADAFLKKVLDKMALQTQPAQLQEPQEPLSTLRPVSNPTIPSPLRQTARPSKFVTEEDVIFEPVSAQSAIARSLETTANKAGNKFQLS</sequence>
<keyword id="KW-0472">Membrane</keyword>
<keyword id="KW-0597">Phosphoprotein</keyword>
<keyword id="KW-0749">Sporulation</keyword>
<keyword id="KW-0812">Transmembrane</keyword>
<keyword id="KW-1133">Transmembrane helix</keyword>
<comment type="function">
    <text evidence="1">Involved in spore wall assembly.</text>
</comment>
<comment type="subcellular location">
    <subcellularLocation>
        <location evidence="1">Membrane</location>
        <topology evidence="1">Multi-pass membrane protein</topology>
    </subcellularLocation>
</comment>
<comment type="similarity">
    <text evidence="5">Belongs to the OSW5 family.</text>
</comment>
<organism>
    <name type="scientific">Saccharomyces cerevisiae (strain YJM789)</name>
    <name type="common">Baker's yeast</name>
    <dbReference type="NCBI Taxonomy" id="307796"/>
    <lineage>
        <taxon>Eukaryota</taxon>
        <taxon>Fungi</taxon>
        <taxon>Dikarya</taxon>
        <taxon>Ascomycota</taxon>
        <taxon>Saccharomycotina</taxon>
        <taxon>Saccharomycetes</taxon>
        <taxon>Saccharomycetales</taxon>
        <taxon>Saccharomycetaceae</taxon>
        <taxon>Saccharomyces</taxon>
    </lineage>
</organism>
<protein>
    <recommendedName>
        <fullName>Outer spore wall protein 5</fullName>
    </recommendedName>
</protein>
<dbReference type="EMBL" id="AAFW02000021">
    <property type="protein sequence ID" value="EDN64081.1"/>
    <property type="molecule type" value="Genomic_DNA"/>
</dbReference>
<dbReference type="SMR" id="A6ZMK7"/>
<dbReference type="HOGENOM" id="CLU_147574_0_0_1"/>
<dbReference type="Proteomes" id="UP000007060">
    <property type="component" value="Unassembled WGS sequence"/>
</dbReference>
<dbReference type="GO" id="GO:0016020">
    <property type="term" value="C:membrane"/>
    <property type="evidence" value="ECO:0007669"/>
    <property type="project" value="UniProtKB-SubCell"/>
</dbReference>
<dbReference type="GO" id="GO:0030435">
    <property type="term" value="P:sporulation resulting in formation of a cellular spore"/>
    <property type="evidence" value="ECO:0007669"/>
    <property type="project" value="UniProtKB-KW"/>
</dbReference>
<dbReference type="InterPro" id="IPR031430">
    <property type="entry name" value="Osw5"/>
</dbReference>
<dbReference type="Pfam" id="PF17062">
    <property type="entry name" value="Osw5"/>
    <property type="match status" value="1"/>
</dbReference>
<evidence type="ECO:0000250" key="1"/>
<evidence type="ECO:0000250" key="2">
    <source>
        <dbReference type="UniProtKB" id="P40219"/>
    </source>
</evidence>
<evidence type="ECO:0000255" key="3"/>
<evidence type="ECO:0000256" key="4">
    <source>
        <dbReference type="SAM" id="MobiDB-lite"/>
    </source>
</evidence>
<evidence type="ECO:0000305" key="5"/>
<name>OSW5_YEAS7</name>
<reference key="1">
    <citation type="journal article" date="2007" name="Proc. Natl. Acad. Sci. U.S.A.">
        <title>Genome sequencing and comparative analysis of Saccharomyces cerevisiae strain YJM789.</title>
        <authorList>
            <person name="Wei W."/>
            <person name="McCusker J.H."/>
            <person name="Hyman R.W."/>
            <person name="Jones T."/>
            <person name="Ning Y."/>
            <person name="Cao Z."/>
            <person name="Gu Z."/>
            <person name="Bruno D."/>
            <person name="Miranda M."/>
            <person name="Nguyen M."/>
            <person name="Wilhelmy J."/>
            <person name="Komp C."/>
            <person name="Tamse R."/>
            <person name="Wang X."/>
            <person name="Jia P."/>
            <person name="Luedi P."/>
            <person name="Oefner P.J."/>
            <person name="David L."/>
            <person name="Dietrich F.S."/>
            <person name="Li Y."/>
            <person name="Davis R.W."/>
            <person name="Steinmetz L.M."/>
        </authorList>
    </citation>
    <scope>NUCLEOTIDE SEQUENCE [LARGE SCALE GENOMIC DNA]</scope>
    <source>
        <strain>YJM789</strain>
    </source>
</reference>
<feature type="chain" id="PRO_0000405528" description="Outer spore wall protein 5">
    <location>
        <begin position="1"/>
        <end position="148"/>
    </location>
</feature>
<feature type="topological domain" description="Cytoplasmic" evidence="3">
    <location>
        <begin position="1"/>
        <end position="7"/>
    </location>
</feature>
<feature type="transmembrane region" description="Helical" evidence="3">
    <location>
        <begin position="8"/>
        <end position="28"/>
    </location>
</feature>
<feature type="topological domain" description="Extracellular" evidence="3">
    <location>
        <position position="29"/>
    </location>
</feature>
<feature type="transmembrane region" description="Helical" evidence="3">
    <location>
        <begin position="30"/>
        <end position="50"/>
    </location>
</feature>
<feature type="topological domain" description="Cytoplasmic" evidence="3">
    <location>
        <begin position="51"/>
        <end position="148"/>
    </location>
</feature>
<feature type="region of interest" description="Disordered" evidence="4">
    <location>
        <begin position="83"/>
        <end position="110"/>
    </location>
</feature>
<feature type="compositionally biased region" description="Polar residues" evidence="4">
    <location>
        <begin position="93"/>
        <end position="109"/>
    </location>
</feature>
<feature type="modified residue" description="Phosphoserine" evidence="2">
    <location>
        <position position="102"/>
    </location>
</feature>